<feature type="chain" id="PRO_0000362882" description="ATP synthase subunit c, chloroplastic">
    <location>
        <begin position="1"/>
        <end position="81"/>
    </location>
</feature>
<feature type="transmembrane region" description="Helical" evidence="1">
    <location>
        <begin position="3"/>
        <end position="23"/>
    </location>
</feature>
<feature type="transmembrane region" description="Helical" evidence="1">
    <location>
        <begin position="57"/>
        <end position="77"/>
    </location>
</feature>
<feature type="site" description="Reversibly protonated during proton transport" evidence="1">
    <location>
        <position position="61"/>
    </location>
</feature>
<comment type="function">
    <text evidence="1">F(1)F(0) ATP synthase produces ATP from ADP in the presence of a proton or sodium gradient. F-type ATPases consist of two structural domains, F(1) containing the extramembraneous catalytic core and F(0) containing the membrane proton channel, linked together by a central stalk and a peripheral stalk. During catalysis, ATP synthesis in the catalytic domain of F(1) is coupled via a rotary mechanism of the central stalk subunits to proton translocation.</text>
</comment>
<comment type="function">
    <text evidence="1">Key component of the F(0) channel; it plays a direct role in translocation across the membrane. A homomeric c-ring of between 10-14 subunits forms the central stalk rotor element with the F(1) delta and epsilon subunits.</text>
</comment>
<comment type="subunit">
    <text evidence="1">F-type ATPases have 2 components, F(1) - the catalytic core - and F(0) - the membrane proton channel. F(1) has five subunits: alpha(3), beta(3), gamma(1), delta(1), epsilon(1). F(0) has four main subunits: a(1), b(1), b'(1) and c(10-14). The alpha and beta chains form an alternating ring which encloses part of the gamma chain. F(1) is attached to F(0) by a central stalk formed by the gamma and epsilon chains, while a peripheral stalk is formed by the delta, b and b' chains.</text>
</comment>
<comment type="subcellular location">
    <subcellularLocation>
        <location evidence="1">Plastid</location>
        <location evidence="1">Chloroplast thylakoid membrane</location>
        <topology evidence="1">Multi-pass membrane protein</topology>
    </subcellularLocation>
</comment>
<comment type="miscellaneous">
    <text>In plastids the F-type ATPase is also known as CF(1)CF(0).</text>
</comment>
<comment type="similarity">
    <text evidence="1">Belongs to the ATPase C chain family.</text>
</comment>
<evidence type="ECO:0000255" key="1">
    <source>
        <dbReference type="HAMAP-Rule" id="MF_01396"/>
    </source>
</evidence>
<protein>
    <recommendedName>
        <fullName evidence="1">ATP synthase subunit c, chloroplastic</fullName>
    </recommendedName>
    <alternativeName>
        <fullName evidence="1">ATP synthase F(0) sector subunit c</fullName>
    </alternativeName>
    <alternativeName>
        <fullName evidence="1">ATPase subunit III</fullName>
    </alternativeName>
    <alternativeName>
        <fullName evidence="1">F-type ATPase subunit c</fullName>
        <shortName evidence="1">F-ATPase subunit c</shortName>
    </alternativeName>
    <alternativeName>
        <fullName evidence="1">Lipid-binding protein</fullName>
    </alternativeName>
</protein>
<reference key="1">
    <citation type="submission" date="2007-03" db="EMBL/GenBank/DDBJ databases">
        <title>Sequencing analysis of Aethionema grandiflorum chloroplast DNA.</title>
        <authorList>
            <person name="Hosouchi T."/>
            <person name="Tsuruoka H."/>
            <person name="Kotani H."/>
        </authorList>
    </citation>
    <scope>NUCLEOTIDE SEQUENCE [LARGE SCALE GENOMIC DNA]</scope>
</reference>
<proteinExistence type="inferred from homology"/>
<organism>
    <name type="scientific">Aethionema grandiflorum</name>
    <name type="common">Persian stone-cress</name>
    <dbReference type="NCBI Taxonomy" id="72657"/>
    <lineage>
        <taxon>Eukaryota</taxon>
        <taxon>Viridiplantae</taxon>
        <taxon>Streptophyta</taxon>
        <taxon>Embryophyta</taxon>
        <taxon>Tracheophyta</taxon>
        <taxon>Spermatophyta</taxon>
        <taxon>Magnoliopsida</taxon>
        <taxon>eudicotyledons</taxon>
        <taxon>Gunneridae</taxon>
        <taxon>Pentapetalae</taxon>
        <taxon>rosids</taxon>
        <taxon>malvids</taxon>
        <taxon>Brassicales</taxon>
        <taxon>Brassicaceae</taxon>
        <taxon>Aethionemeae</taxon>
        <taxon>Aethionema</taxon>
    </lineage>
</organism>
<keyword id="KW-0066">ATP synthesis</keyword>
<keyword id="KW-0138">CF(0)</keyword>
<keyword id="KW-0150">Chloroplast</keyword>
<keyword id="KW-0375">Hydrogen ion transport</keyword>
<keyword id="KW-0406">Ion transport</keyword>
<keyword id="KW-0446">Lipid-binding</keyword>
<keyword id="KW-0472">Membrane</keyword>
<keyword id="KW-0934">Plastid</keyword>
<keyword id="KW-0793">Thylakoid</keyword>
<keyword id="KW-0812">Transmembrane</keyword>
<keyword id="KW-1133">Transmembrane helix</keyword>
<keyword id="KW-0813">Transport</keyword>
<gene>
    <name evidence="1" type="primary">atpH</name>
</gene>
<dbReference type="EMBL" id="AP009367">
    <property type="protein sequence ID" value="BAF49841.1"/>
    <property type="molecule type" value="Genomic_DNA"/>
</dbReference>
<dbReference type="RefSeq" id="YP_001123017.1">
    <property type="nucleotide sequence ID" value="NC_009266.1"/>
</dbReference>
<dbReference type="SMR" id="A4QJI6"/>
<dbReference type="GeneID" id="4962330"/>
<dbReference type="GO" id="GO:0009535">
    <property type="term" value="C:chloroplast thylakoid membrane"/>
    <property type="evidence" value="ECO:0007669"/>
    <property type="project" value="UniProtKB-SubCell"/>
</dbReference>
<dbReference type="GO" id="GO:0045259">
    <property type="term" value="C:proton-transporting ATP synthase complex"/>
    <property type="evidence" value="ECO:0007669"/>
    <property type="project" value="UniProtKB-KW"/>
</dbReference>
<dbReference type="GO" id="GO:0033177">
    <property type="term" value="C:proton-transporting two-sector ATPase complex, proton-transporting domain"/>
    <property type="evidence" value="ECO:0007669"/>
    <property type="project" value="InterPro"/>
</dbReference>
<dbReference type="GO" id="GO:0008289">
    <property type="term" value="F:lipid binding"/>
    <property type="evidence" value="ECO:0007669"/>
    <property type="project" value="UniProtKB-KW"/>
</dbReference>
<dbReference type="GO" id="GO:0046933">
    <property type="term" value="F:proton-transporting ATP synthase activity, rotational mechanism"/>
    <property type="evidence" value="ECO:0007669"/>
    <property type="project" value="UniProtKB-UniRule"/>
</dbReference>
<dbReference type="CDD" id="cd18183">
    <property type="entry name" value="ATP-synt_Fo_c_ATPH"/>
    <property type="match status" value="1"/>
</dbReference>
<dbReference type="FunFam" id="1.20.20.10:FF:000001">
    <property type="entry name" value="ATP synthase subunit c, chloroplastic"/>
    <property type="match status" value="1"/>
</dbReference>
<dbReference type="Gene3D" id="1.20.20.10">
    <property type="entry name" value="F1F0 ATP synthase subunit C"/>
    <property type="match status" value="1"/>
</dbReference>
<dbReference type="HAMAP" id="MF_01396">
    <property type="entry name" value="ATP_synth_c_bact"/>
    <property type="match status" value="1"/>
</dbReference>
<dbReference type="InterPro" id="IPR005953">
    <property type="entry name" value="ATP_synth_csu_bac/chlpt"/>
</dbReference>
<dbReference type="InterPro" id="IPR000454">
    <property type="entry name" value="ATP_synth_F0_csu"/>
</dbReference>
<dbReference type="InterPro" id="IPR020537">
    <property type="entry name" value="ATP_synth_F0_csu_DDCD_BS"/>
</dbReference>
<dbReference type="InterPro" id="IPR038662">
    <property type="entry name" value="ATP_synth_F0_csu_sf"/>
</dbReference>
<dbReference type="InterPro" id="IPR002379">
    <property type="entry name" value="ATPase_proteolipid_c-like_dom"/>
</dbReference>
<dbReference type="InterPro" id="IPR035921">
    <property type="entry name" value="F/V-ATP_Csub_sf"/>
</dbReference>
<dbReference type="NCBIfam" id="TIGR01260">
    <property type="entry name" value="ATP_synt_c"/>
    <property type="match status" value="1"/>
</dbReference>
<dbReference type="NCBIfam" id="NF005608">
    <property type="entry name" value="PRK07354.1"/>
    <property type="match status" value="1"/>
</dbReference>
<dbReference type="PANTHER" id="PTHR10031">
    <property type="entry name" value="ATP SYNTHASE LIPID-BINDING PROTEIN, MITOCHONDRIAL"/>
    <property type="match status" value="1"/>
</dbReference>
<dbReference type="PANTHER" id="PTHR10031:SF0">
    <property type="entry name" value="ATPASE PROTEIN 9"/>
    <property type="match status" value="1"/>
</dbReference>
<dbReference type="Pfam" id="PF00137">
    <property type="entry name" value="ATP-synt_C"/>
    <property type="match status" value="1"/>
</dbReference>
<dbReference type="PRINTS" id="PR00124">
    <property type="entry name" value="ATPASEC"/>
</dbReference>
<dbReference type="SUPFAM" id="SSF81333">
    <property type="entry name" value="F1F0 ATP synthase subunit C"/>
    <property type="match status" value="1"/>
</dbReference>
<dbReference type="PROSITE" id="PS00605">
    <property type="entry name" value="ATPASE_C"/>
    <property type="match status" value="1"/>
</dbReference>
<geneLocation type="chloroplast"/>
<sequence>MNPLISAASVIAAGLAVGLASIGPGVGQGTAAGQAVEGIARQPEAEGKIRGTLLLSLAFMEALTIYGLVVALALLFANPFV</sequence>
<name>ATPH_AETGR</name>
<accession>A4QJI6</accession>